<reference key="1">
    <citation type="journal article" date="1997" name="FEBS Lett.">
        <title>Primary structure and synthesis of Imperatoxin A (IpTx(a)), a peptide activator of Ca2+ release channels/ryanodine receptors.</title>
        <authorList>
            <person name="Zamudio F.Z."/>
            <person name="Gurrola G.B."/>
            <person name="Arevalo C."/>
            <person name="Sreekumar R."/>
            <person name="Walker J.W."/>
            <person name="Valdivia H.H."/>
            <person name="Possani L.D."/>
        </authorList>
    </citation>
    <scope>PROTEIN SEQUENCE</scope>
    <scope>SYNTHESIS</scope>
    <scope>FUNCTION</scope>
    <scope>SUBCELLULAR LOCATION</scope>
    <source>
        <tissue>Venom</tissue>
    </source>
</reference>
<reference key="2">
    <citation type="journal article" date="1992" name="Proc. Natl. Acad. Sci. U.S.A.">
        <title>Scorpion toxins targeted against the sarcoplasmic reticulum Ca(2+)-release channel of skeletal and cardiac muscle.</title>
        <authorList>
            <person name="Valdivia H.H."/>
            <person name="Kirby M.S."/>
            <person name="Lederer W.J."/>
            <person name="Coronado R."/>
        </authorList>
    </citation>
    <scope>IDENTIFICATION</scope>
    <scope>FUNCTION</scope>
</reference>
<reference key="3">
    <citation type="journal article" date="1998" name="J. Gen. Physiol.">
        <title>Imperatoxin A induces subconductance states in Ca2+ release channels (ryanodine receptors) of cardiac and skeletal muscle.</title>
        <authorList>
            <person name="Tripathy A."/>
            <person name="Resch W."/>
            <person name="Xu L."/>
            <person name="Valdivia H.H."/>
            <person name="Meissner G."/>
        </authorList>
    </citation>
    <scope>FUNCTION ON RYR1 AND RYR2</scope>
</reference>
<reference key="4">
    <citation type="journal article" date="2002" name="Biophys. J.">
        <title>Imperatoxin A enhances Ca(2+) release in developing skeletal muscle containing ryanodine receptor type 3.</title>
        <authorList>
            <person name="Nabhani T."/>
            <person name="Zhu X."/>
            <person name="Simeoni I."/>
            <person name="Sorrentino V."/>
            <person name="Valdivia H.H."/>
            <person name="Garcia J."/>
        </authorList>
    </citation>
    <scope>FUNCTION ON RYR3</scope>
</reference>
<reference key="5">
    <citation type="journal article" date="2004" name="J. Biol. Chem.">
        <title>Multiple actions of imperatoxin A on ryanodine receptors: interactions with the II-III loop 'A' fragment.</title>
        <authorList>
            <person name="Dulhunty A.F."/>
            <person name="Curtis S.M."/>
            <person name="Watson S."/>
            <person name="Cengia L."/>
            <person name="Casarotto M.G."/>
        </authorList>
    </citation>
    <scope>FUNCTION</scope>
</reference>
<reference key="6">
    <citation type="journal article" date="2016" name="J. Gen. Physiol.">
        <title>Structure-function relationships of peptides forming the calcin family of ryanodine receptor ligands.</title>
        <authorList>
            <person name="Xiao L."/>
            <person name="Gurrola G.B."/>
            <person name="Zhang J."/>
            <person name="Valdivia C.R."/>
            <person name="SanMartin M."/>
            <person name="Zamudio F.Z."/>
            <person name="Zhang L."/>
            <person name="Possani L.D."/>
            <person name="Valdivia H.H."/>
        </authorList>
    </citation>
    <scope>FUNCTION</scope>
    <scope>SYNTHESIS</scope>
    <scope>NOMENCLATURE</scope>
    <scope>3D-STRUCTURE MODELING</scope>
</reference>
<reference key="7">
    <citation type="journal article" date="2004" name="Biochem. J.">
        <title>Molecular basis of the high-affinity activation of type 1 ryanodine receptors by imperatoxin A.</title>
        <authorList>
            <person name="Lee C.W."/>
            <person name="Lee E.H."/>
            <person name="Takeuchi K."/>
            <person name="Takahashi H."/>
            <person name="Shimada I."/>
            <person name="Sato K."/>
            <person name="Shin S.Y."/>
            <person name="Kim do H."/>
            <person name="Kim J.I."/>
        </authorList>
    </citation>
    <scope>STRUCTURE BY NMR</scope>
    <scope>DISULFIDE BONDS</scope>
    <scope>MUTAGENESIS OF GLY-1; ASP-2; LEU-4; PRO-5; HIS-6; LEU-7; LYS-8; ARG-9; LYS-11; ASP-13; ASN-14; ASP-15; GLY-18; LYS-19; LYS-20; LYS-22; ARG-23; ARG-24; GLY-25; THR-26; ASN-27; GLU-29; LYS-30; ARG-31 AND ARG-33</scope>
</reference>
<evidence type="ECO:0000250" key="1">
    <source>
        <dbReference type="UniProtKB" id="A0A1L4BJ42"/>
    </source>
</evidence>
<evidence type="ECO:0000250" key="2">
    <source>
        <dbReference type="UniProtKB" id="B8QG00"/>
    </source>
</evidence>
<evidence type="ECO:0000250" key="3">
    <source>
        <dbReference type="UniProtKB" id="P60254"/>
    </source>
</evidence>
<evidence type="ECO:0000269" key="4">
    <source>
    </source>
</evidence>
<evidence type="ECO:0000269" key="5">
    <source>
    </source>
</evidence>
<evidence type="ECO:0000269" key="6">
    <source>
    </source>
</evidence>
<evidence type="ECO:0000269" key="7">
    <source>
    </source>
</evidence>
<evidence type="ECO:0000269" key="8">
    <source>
    </source>
</evidence>
<evidence type="ECO:0000269" key="9">
    <source>
    </source>
</evidence>
<evidence type="ECO:0000303" key="10">
    <source>
    </source>
</evidence>
<evidence type="ECO:0000303" key="11">
    <source>
    </source>
</evidence>
<evidence type="ECO:0000303" key="12">
    <source>
    </source>
</evidence>
<evidence type="ECO:0000305" key="13"/>
<evidence type="ECO:0000305" key="14">
    <source>
    </source>
</evidence>
<evidence type="ECO:0000312" key="15">
    <source>
        <dbReference type="PDB" id="1IE6"/>
    </source>
</evidence>
<evidence type="ECO:0007829" key="16">
    <source>
        <dbReference type="PDB" id="1IE6"/>
    </source>
</evidence>
<evidence type="ECO:0007829" key="17">
    <source>
        <dbReference type="PDB" id="8DTB"/>
    </source>
</evidence>
<comment type="function">
    <text evidence="1 2 3 4 5 7 9">This toxin affects the activity of ryanodine receptors 1, 2 and 3 (RyR1, RyR2 and RyR3) (PubMed:11867448, PubMed:1334561, PubMed:9565405). At lower concentrations the toxin increases full openings of the RyRs, and at higher concentrations it inhibits full openings and induces openings to subconductance levels (30% of the full conductance state) and reduces the number of full conductance openings (PubMed:27114612, PubMed:9565405). The different actions may be attributed to the toxins binding at different sites on the RyRs, with binding at a high-affinity site mediating the increase in full openings and the induction of subconductance states evoked upon binding to a lower-affinity site (PubMed:14699105). Furthermore, it triggers calcium release from sarcoplasmic vesicles (11.7 nM are enough to induce a sharp release, and 70% of the total calcium is released after toxin (100 nM) addition) probably by acting as a cell-penetrating peptide (CPP) (PubMed:1334561, PubMed:27114612). In addition, it has been shown to dose-dependently stimulate ryanodine binding to RyR1 (EC(50)=8.7 nM) (PubMed:27114612). It also augments the bell-shaped calcium-[3H]ryanodine binding curve that is maximal at about 10 uM calcium concentration (PubMed:27114612). It binds a different site as ryanodine (PubMed:9565405). It acts synergistically with caffeine (By similarity). In vivo, intracerebroventricular injection into mice induces neurotoxic symptoms, followed by death (By similarity).</text>
</comment>
<comment type="subcellular location">
    <subcellularLocation>
        <location evidence="8">Secreted</location>
    </subcellularLocation>
</comment>
<comment type="tissue specificity">
    <text evidence="14">Expressed by the venom gland.</text>
</comment>
<comment type="domain">
    <text evidence="6">The presence of a 'disulfide through disulfide knot' structurally defines this protein as a knottin.</text>
</comment>
<comment type="similarity">
    <text evidence="13">Belongs to the scorpion calcin family.</text>
</comment>
<sequence>GDCLPHLKRCKADNDCCGKKCKRRGTNAEKRCR</sequence>
<dbReference type="PDB" id="1IE6">
    <property type="method" value="NMR"/>
    <property type="chains" value="A=1-33"/>
</dbReference>
<dbReference type="PDB" id="8DTB">
    <property type="method" value="EM"/>
    <property type="resolution" value="3.14 A"/>
    <property type="chains" value="B=1-33"/>
</dbReference>
<dbReference type="PDB" id="8DUJ">
    <property type="method" value="EM"/>
    <property type="resolution" value="3.70 A"/>
    <property type="chains" value="M=1-33"/>
</dbReference>
<dbReference type="PDBsum" id="1IE6"/>
<dbReference type="PDBsum" id="8DTB"/>
<dbReference type="PDBsum" id="8DUJ"/>
<dbReference type="BMRB" id="P59868"/>
<dbReference type="EMDB" id="EMD-27695"/>
<dbReference type="EMDB" id="EMD-27721"/>
<dbReference type="SMR" id="P59868"/>
<dbReference type="EvolutionaryTrace" id="P59868"/>
<dbReference type="GO" id="GO:0005576">
    <property type="term" value="C:extracellular region"/>
    <property type="evidence" value="ECO:0007669"/>
    <property type="project" value="UniProtKB-SubCell"/>
</dbReference>
<dbReference type="GO" id="GO:0019855">
    <property type="term" value="F:calcium channel inhibitor activity"/>
    <property type="evidence" value="ECO:0007669"/>
    <property type="project" value="InterPro"/>
</dbReference>
<dbReference type="GO" id="GO:0090729">
    <property type="term" value="F:toxin activity"/>
    <property type="evidence" value="ECO:0007669"/>
    <property type="project" value="UniProtKB-KW"/>
</dbReference>
<dbReference type="InterPro" id="IPR012632">
    <property type="entry name" value="Scorpion_calcine"/>
</dbReference>
<dbReference type="Pfam" id="PF08099">
    <property type="entry name" value="Toxin_27"/>
    <property type="match status" value="1"/>
</dbReference>
<dbReference type="SUPFAM" id="SSF57059">
    <property type="entry name" value="omega toxin-like"/>
    <property type="match status" value="1"/>
</dbReference>
<dbReference type="PROSITE" id="PS60028">
    <property type="entry name" value="SCORPION_CALCINE"/>
    <property type="match status" value="1"/>
</dbReference>
<organism>
    <name type="scientific">Pandinus imperator</name>
    <name type="common">Emperor scorpion</name>
    <dbReference type="NCBI Taxonomy" id="55084"/>
    <lineage>
        <taxon>Eukaryota</taxon>
        <taxon>Metazoa</taxon>
        <taxon>Ecdysozoa</taxon>
        <taxon>Arthropoda</taxon>
        <taxon>Chelicerata</taxon>
        <taxon>Arachnida</taxon>
        <taxon>Scorpiones</taxon>
        <taxon>Iurida</taxon>
        <taxon>Scorpionoidea</taxon>
        <taxon>Scorpionidae</taxon>
        <taxon>Pandininae</taxon>
        <taxon>Pandinus</taxon>
    </lineage>
</organism>
<proteinExistence type="evidence at protein level"/>
<feature type="peptide" id="PRO_0000044949" description="Imperacalcin" evidence="8">
    <location>
        <begin position="1"/>
        <end position="33"/>
    </location>
</feature>
<feature type="region of interest" description="Important for stimulation of [3H]ryanodine binding to RYR1" evidence="6">
    <location>
        <begin position="8"/>
        <end position="9"/>
    </location>
</feature>
<feature type="region of interest" description="Important for stimulation of [3H]ryanodine binding to RYR1" evidence="6">
    <location>
        <begin position="19"/>
        <end position="20"/>
    </location>
</feature>
<feature type="region of interest" description="Essential for stimulation of [3H]ryanodine binding to RYR1" evidence="6">
    <location>
        <begin position="22"/>
        <end position="24"/>
    </location>
</feature>
<feature type="region of interest" description="Important for stimulation of [3H]ryanodine binding to RYR1" evidence="6">
    <location>
        <begin position="25"/>
        <end position="27"/>
    </location>
</feature>
<feature type="site" description="Important for stimulation of [3H]ryanodine binding to RYR1" evidence="6">
    <location>
        <position position="6"/>
    </location>
</feature>
<feature type="site" description="Essential for stimulation of [3H]ryanodine binding to RYR1" evidence="6">
    <location>
        <position position="7"/>
    </location>
</feature>
<feature type="site" description="Important for stimulation of [3H]ryanodine binding to RYR1" evidence="6">
    <location>
        <position position="11"/>
    </location>
</feature>
<feature type="site" description="Important for stimulation of [3H]ryanodine binding to RYR1" evidence="6">
    <location>
        <position position="30"/>
    </location>
</feature>
<feature type="site" description="Essential for stimulation of [3H]ryanodine binding to RYR1" evidence="6">
    <location>
        <position position="31"/>
    </location>
</feature>
<feature type="site" description="Essential for stimulation of [3H]ryanodine binding to RYR1" evidence="6">
    <location>
        <position position="33"/>
    </location>
</feature>
<feature type="disulfide bond" evidence="6 15">
    <location>
        <begin position="3"/>
        <end position="17"/>
    </location>
</feature>
<feature type="disulfide bond" evidence="6 15">
    <location>
        <begin position="10"/>
        <end position="21"/>
    </location>
</feature>
<feature type="disulfide bond" evidence="6 15">
    <location>
        <begin position="16"/>
        <end position="32"/>
    </location>
</feature>
<feature type="mutagenesis site" description="1.18-fold decrease of stimulation of [3H]ryanodine binding to RYR1." evidence="6">
    <original>G</original>
    <variation>A</variation>
    <location>
        <position position="1"/>
    </location>
</feature>
<feature type="mutagenesis site" description="2.33-fold increase of stimulation of [3H]ryanodine binding to RYR1." evidence="6">
    <original>D</original>
    <variation>A</variation>
    <location>
        <position position="2"/>
    </location>
</feature>
<feature type="mutagenesis site" description="Linear IpCa; Loss of stimulation of [3H]ryanodine binding to RYR1." evidence="6">
    <original>C</original>
    <variation>A</variation>
    <location>
        <position position="3"/>
    </location>
</feature>
<feature type="mutagenesis site" description="1.93-fold decrease of stimulation of [3H]ryanodine binding to RYR1." evidence="6">
    <original>L</original>
    <variation>A</variation>
    <location>
        <position position="4"/>
    </location>
</feature>
<feature type="mutagenesis site" description="1.43-fold decrease of stimulation of [3H]ryanodine binding to RYR1." evidence="6">
    <original>P</original>
    <variation>A</variation>
    <location>
        <position position="5"/>
    </location>
</feature>
<feature type="mutagenesis site" description="20.72-fold decrease of stimulation of [3H]ryanodine binding to RYR1." evidence="6">
    <original>H</original>
    <variation>A</variation>
    <location>
        <position position="6"/>
    </location>
</feature>
<feature type="mutagenesis site" description="97.51-fold decrease of stimulation of [3H]ryanodine binding to RYR1." evidence="6">
    <original>L</original>
    <variation>A</variation>
    <location>
        <position position="7"/>
    </location>
</feature>
<feature type="mutagenesis site" description="4.60-fold decrease of stimulation of [3H]ryanodine binding to RYR1." evidence="6">
    <original>K</original>
    <variation>A</variation>
    <location>
        <position position="8"/>
    </location>
</feature>
<feature type="mutagenesis site" description="25.62-fold decrease of stimulation of [3H]ryanodine binding to RYR1." evidence="6">
    <original>R</original>
    <variation>A</variation>
    <location>
        <position position="9"/>
    </location>
</feature>
<feature type="mutagenesis site" description="Linear IpCa; Loss of stimulation of [3H]ryanodine binding to RYR1." evidence="6">
    <original>C</original>
    <variation>A</variation>
    <location>
        <position position="10"/>
    </location>
</feature>
<feature type="mutagenesis site" description="6.83-fold decrease of stimulation of [3H]ryanodine binding to RYR1." evidence="6">
    <original>K</original>
    <variation>A</variation>
    <location>
        <position position="11"/>
    </location>
</feature>
<feature type="mutagenesis site" description="3.08-fold increase of stimulation of [3H]ryanodine binding to RYR1." evidence="6">
    <original>D</original>
    <variation>A</variation>
    <location>
        <position position="13"/>
    </location>
</feature>
<feature type="mutagenesis site" description="1.14-fold decrease of stimulation of [3H]ryanodine binding to RYR1." evidence="6">
    <original>N</original>
    <variation>A</variation>
    <location>
        <position position="14"/>
    </location>
</feature>
<feature type="mutagenesis site" description="2.73-fold increase of stimulation of [3H]ryanodine binding to RYR1." evidence="6">
    <original>D</original>
    <variation>A</variation>
    <location>
        <position position="15"/>
    </location>
</feature>
<feature type="mutagenesis site" description="Linear IpCa; Loss of stimulation of [3H]ryanodine binding to RYR1." evidence="6">
    <original>C</original>
    <variation>A</variation>
    <location>
        <position position="16"/>
    </location>
</feature>
<feature type="mutagenesis site" description="Linear IpCa; Loss of stimulation of [3H]ryanodine binding to RYR1." evidence="6">
    <original>C</original>
    <variation>A</variation>
    <location>
        <position position="17"/>
    </location>
</feature>
<feature type="mutagenesis site" description="1.16-fold decrease of stimulation of [3H]ryanodine binding to RYR1." evidence="6">
    <original>G</original>
    <variation>A</variation>
    <location>
        <position position="18"/>
    </location>
</feature>
<feature type="mutagenesis site" description="4.96-fold decrease of stimulation of [3H]ryanodine binding to RYR1." evidence="6">
    <original>K</original>
    <variation>A</variation>
    <location>
        <position position="19"/>
    </location>
</feature>
<feature type="mutagenesis site" description="16.91-fold decrease of stimulation of [3H]ryanodine binding to RYR1." evidence="6">
    <original>K</original>
    <variation>A</variation>
    <location>
        <position position="20"/>
    </location>
</feature>
<feature type="mutagenesis site" description="Linear IpCa; Loss of stimulation of [3H]ryanodine binding to RYR1." evidence="6">
    <original>C</original>
    <variation>A</variation>
    <location>
        <position position="21"/>
    </location>
</feature>
<feature type="mutagenesis site" description="69.92-fold decrease of stimulation of [3H]ryanodine binding to RYR1." evidence="6">
    <original>K</original>
    <variation>A</variation>
    <location>
        <position position="22"/>
    </location>
</feature>
<feature type="mutagenesis site" description="418.48-fold decrease of stimulation of [3H]ryanodine binding to RYR1." evidence="6">
    <original>R</original>
    <variation>A</variation>
    <location>
        <position position="23"/>
    </location>
</feature>
<feature type="mutagenesis site" description="Loss of stimulation of [3H]ryanodine binding to RYR1." evidence="6">
    <original>R</original>
    <variation>A</variation>
    <location>
        <position position="24"/>
    </location>
</feature>
<feature type="mutagenesis site" description="23.96-fold decrease of stimulation of [3H]ryanodine binding to RYR1." evidence="6">
    <original>G</original>
    <variation>A</variation>
    <location>
        <position position="25"/>
    </location>
</feature>
<feature type="mutagenesis site" description="11.52-fold decrease of stimulation of [3H]ryanodine binding to RYR1." evidence="6">
    <original>T</original>
    <variation>A</variation>
    <location>
        <position position="26"/>
    </location>
</feature>
<feature type="mutagenesis site" description="20.09-fold decrease of stimulation of [3H]ryanodine binding to RYR1." evidence="6">
    <original>N</original>
    <variation>A</variation>
    <location>
        <position position="27"/>
    </location>
</feature>
<feature type="mutagenesis site" description="2.35-fold increase of stimulation of [3H]ryanodine binding to RYR1." evidence="6">
    <original>E</original>
    <variation>A</variation>
    <location>
        <position position="29"/>
    </location>
</feature>
<feature type="mutagenesis site" description="21.69-fold decrease of stimulation of [3H]ryanodine binding to RYR1." evidence="6">
    <original>K</original>
    <variation>A</variation>
    <location>
        <position position="30"/>
    </location>
</feature>
<feature type="mutagenesis site" description="Loss of stimulation of [3H]ryanodine binding to RYR1." evidence="6">
    <original>R</original>
    <variation>A</variation>
    <location>
        <position position="31"/>
    </location>
</feature>
<feature type="mutagenesis site" description="Linear IpCa; Loss of stimulation of [3H]ryanodine binding to RYR1." evidence="6">
    <original>C</original>
    <variation>A</variation>
    <location>
        <position position="32"/>
    </location>
</feature>
<feature type="mutagenesis site" description="Loss of stimulation of [3H]ryanodine binding to RYR1." evidence="6">
    <original>R</original>
    <variation>A</variation>
    <location>
        <position position="33"/>
    </location>
</feature>
<feature type="strand" evidence="17">
    <location>
        <begin position="6"/>
        <end position="9"/>
    </location>
</feature>
<feature type="strand" evidence="17">
    <location>
        <begin position="11"/>
        <end position="18"/>
    </location>
</feature>
<feature type="strand" evidence="16">
    <location>
        <begin position="24"/>
        <end position="32"/>
    </location>
</feature>
<keyword id="KW-0002">3D-structure</keyword>
<keyword id="KW-0108">Calcium channel impairing toxin</keyword>
<keyword id="KW-0903">Direct protein sequencing</keyword>
<keyword id="KW-1015">Disulfide bond</keyword>
<keyword id="KW-0872">Ion channel impairing toxin</keyword>
<keyword id="KW-0960">Knottin</keyword>
<keyword id="KW-0528">Neurotoxin</keyword>
<keyword id="KW-1219">Ryanodine-sensitive calcium-release channel impairing toxin</keyword>
<keyword id="KW-0964">Secreted</keyword>
<keyword id="KW-0800">Toxin</keyword>
<accession>P59868</accession>
<protein>
    <recommendedName>
        <fullName evidence="11">Imperacalcin</fullName>
        <shortName evidence="11">IpCa</shortName>
    </recommendedName>
    <alternativeName>
        <fullName evidence="10">Imperatoxin activator</fullName>
    </alternativeName>
    <alternativeName>
        <fullName evidence="10 12">Imperatoxin-A</fullName>
        <shortName evidence="10 12">IpTxa</shortName>
    </alternativeName>
</protein>
<name>CAIMP_PANIM</name>